<dbReference type="EC" id="3.6.-.-" evidence="1"/>
<dbReference type="EMBL" id="CP001048">
    <property type="protein sequence ID" value="ACC91144.1"/>
    <property type="molecule type" value="Genomic_DNA"/>
</dbReference>
<dbReference type="RefSeq" id="WP_011193350.1">
    <property type="nucleotide sequence ID" value="NZ_CP009780.1"/>
</dbReference>
<dbReference type="SMR" id="B2K868"/>
<dbReference type="GeneID" id="49788066"/>
<dbReference type="KEGG" id="ypb:YPTS_4201"/>
<dbReference type="PATRIC" id="fig|502801.10.peg.3670"/>
<dbReference type="GO" id="GO:0005829">
    <property type="term" value="C:cytosol"/>
    <property type="evidence" value="ECO:0007669"/>
    <property type="project" value="TreeGrafter"/>
</dbReference>
<dbReference type="GO" id="GO:0005525">
    <property type="term" value="F:GTP binding"/>
    <property type="evidence" value="ECO:0007669"/>
    <property type="project" value="UniProtKB-UniRule"/>
</dbReference>
<dbReference type="GO" id="GO:0003924">
    <property type="term" value="F:GTPase activity"/>
    <property type="evidence" value="ECO:0007669"/>
    <property type="project" value="UniProtKB-UniRule"/>
</dbReference>
<dbReference type="GO" id="GO:0046872">
    <property type="term" value="F:metal ion binding"/>
    <property type="evidence" value="ECO:0007669"/>
    <property type="project" value="UniProtKB-KW"/>
</dbReference>
<dbReference type="GO" id="GO:0030488">
    <property type="term" value="P:tRNA methylation"/>
    <property type="evidence" value="ECO:0007669"/>
    <property type="project" value="TreeGrafter"/>
</dbReference>
<dbReference type="GO" id="GO:0002098">
    <property type="term" value="P:tRNA wobble uridine modification"/>
    <property type="evidence" value="ECO:0007669"/>
    <property type="project" value="TreeGrafter"/>
</dbReference>
<dbReference type="CDD" id="cd04164">
    <property type="entry name" value="trmE"/>
    <property type="match status" value="1"/>
</dbReference>
<dbReference type="CDD" id="cd14858">
    <property type="entry name" value="TrmE_N"/>
    <property type="match status" value="1"/>
</dbReference>
<dbReference type="FunFam" id="3.30.1360.120:FF:000001">
    <property type="entry name" value="tRNA modification GTPase MnmE"/>
    <property type="match status" value="1"/>
</dbReference>
<dbReference type="FunFam" id="3.40.50.300:FF:000249">
    <property type="entry name" value="tRNA modification GTPase MnmE"/>
    <property type="match status" value="1"/>
</dbReference>
<dbReference type="Gene3D" id="3.40.50.300">
    <property type="entry name" value="P-loop containing nucleotide triphosphate hydrolases"/>
    <property type="match status" value="1"/>
</dbReference>
<dbReference type="Gene3D" id="3.30.1360.120">
    <property type="entry name" value="Probable tRNA modification gtpase trme, domain 1"/>
    <property type="match status" value="1"/>
</dbReference>
<dbReference type="Gene3D" id="1.20.120.430">
    <property type="entry name" value="tRNA modification GTPase MnmE domain 2"/>
    <property type="match status" value="1"/>
</dbReference>
<dbReference type="HAMAP" id="MF_00379">
    <property type="entry name" value="GTPase_MnmE"/>
    <property type="match status" value="1"/>
</dbReference>
<dbReference type="InterPro" id="IPR031168">
    <property type="entry name" value="G_TrmE"/>
</dbReference>
<dbReference type="InterPro" id="IPR006073">
    <property type="entry name" value="GTP-bd"/>
</dbReference>
<dbReference type="InterPro" id="IPR018948">
    <property type="entry name" value="GTP-bd_TrmE_N"/>
</dbReference>
<dbReference type="InterPro" id="IPR004520">
    <property type="entry name" value="GTPase_MnmE"/>
</dbReference>
<dbReference type="InterPro" id="IPR027368">
    <property type="entry name" value="MnmE_dom2"/>
</dbReference>
<dbReference type="InterPro" id="IPR025867">
    <property type="entry name" value="MnmE_helical"/>
</dbReference>
<dbReference type="InterPro" id="IPR027417">
    <property type="entry name" value="P-loop_NTPase"/>
</dbReference>
<dbReference type="InterPro" id="IPR005225">
    <property type="entry name" value="Small_GTP-bd"/>
</dbReference>
<dbReference type="InterPro" id="IPR027266">
    <property type="entry name" value="TrmE/GcvT_dom1"/>
</dbReference>
<dbReference type="NCBIfam" id="TIGR00450">
    <property type="entry name" value="mnmE_trmE_thdF"/>
    <property type="match status" value="1"/>
</dbReference>
<dbReference type="NCBIfam" id="NF003661">
    <property type="entry name" value="PRK05291.1-3"/>
    <property type="match status" value="1"/>
</dbReference>
<dbReference type="NCBIfam" id="TIGR00231">
    <property type="entry name" value="small_GTP"/>
    <property type="match status" value="1"/>
</dbReference>
<dbReference type="PANTHER" id="PTHR42714">
    <property type="entry name" value="TRNA MODIFICATION GTPASE GTPBP3"/>
    <property type="match status" value="1"/>
</dbReference>
<dbReference type="PANTHER" id="PTHR42714:SF2">
    <property type="entry name" value="TRNA MODIFICATION GTPASE GTPBP3, MITOCHONDRIAL"/>
    <property type="match status" value="1"/>
</dbReference>
<dbReference type="Pfam" id="PF01926">
    <property type="entry name" value="MMR_HSR1"/>
    <property type="match status" value="1"/>
</dbReference>
<dbReference type="Pfam" id="PF12631">
    <property type="entry name" value="MnmE_helical"/>
    <property type="match status" value="1"/>
</dbReference>
<dbReference type="Pfam" id="PF10396">
    <property type="entry name" value="TrmE_N"/>
    <property type="match status" value="1"/>
</dbReference>
<dbReference type="SUPFAM" id="SSF52540">
    <property type="entry name" value="P-loop containing nucleoside triphosphate hydrolases"/>
    <property type="match status" value="1"/>
</dbReference>
<dbReference type="SUPFAM" id="SSF116878">
    <property type="entry name" value="TrmE connector domain"/>
    <property type="match status" value="1"/>
</dbReference>
<dbReference type="PROSITE" id="PS51709">
    <property type="entry name" value="G_TRME"/>
    <property type="match status" value="1"/>
</dbReference>
<comment type="function">
    <text evidence="1">Exhibits a very high intrinsic GTPase hydrolysis rate. Involved in the addition of a carboxymethylaminomethyl (cmnm) group at the wobble position (U34) of certain tRNAs, forming tRNA-cmnm(5)s(2)U34.</text>
</comment>
<comment type="cofactor">
    <cofactor evidence="1">
        <name>K(+)</name>
        <dbReference type="ChEBI" id="CHEBI:29103"/>
    </cofactor>
    <text evidence="1">Binds 1 potassium ion per subunit.</text>
</comment>
<comment type="subunit">
    <text evidence="1">Homodimer. Heterotetramer of two MnmE and two MnmG subunits.</text>
</comment>
<comment type="subcellular location">
    <subcellularLocation>
        <location evidence="1">Cytoplasm</location>
    </subcellularLocation>
</comment>
<comment type="similarity">
    <text evidence="1">Belongs to the TRAFAC class TrmE-Era-EngA-EngB-Septin-like GTPase superfamily. TrmE GTPase family.</text>
</comment>
<evidence type="ECO:0000255" key="1">
    <source>
        <dbReference type="HAMAP-Rule" id="MF_00379"/>
    </source>
</evidence>
<feature type="chain" id="PRO_1000197068" description="tRNA modification GTPase MnmE">
    <location>
        <begin position="1"/>
        <end position="454"/>
    </location>
</feature>
<feature type="domain" description="TrmE-type G">
    <location>
        <begin position="216"/>
        <end position="377"/>
    </location>
</feature>
<feature type="binding site" evidence="1">
    <location>
        <position position="23"/>
    </location>
    <ligand>
        <name>(6S)-5-formyl-5,6,7,8-tetrahydrofolate</name>
        <dbReference type="ChEBI" id="CHEBI:57457"/>
    </ligand>
</feature>
<feature type="binding site" evidence="1">
    <location>
        <position position="80"/>
    </location>
    <ligand>
        <name>(6S)-5-formyl-5,6,7,8-tetrahydrofolate</name>
        <dbReference type="ChEBI" id="CHEBI:57457"/>
    </ligand>
</feature>
<feature type="binding site" evidence="1">
    <location>
        <position position="120"/>
    </location>
    <ligand>
        <name>(6S)-5-formyl-5,6,7,8-tetrahydrofolate</name>
        <dbReference type="ChEBI" id="CHEBI:57457"/>
    </ligand>
</feature>
<feature type="binding site" evidence="1">
    <location>
        <begin position="226"/>
        <end position="231"/>
    </location>
    <ligand>
        <name>GTP</name>
        <dbReference type="ChEBI" id="CHEBI:37565"/>
    </ligand>
</feature>
<feature type="binding site" evidence="1">
    <location>
        <position position="226"/>
    </location>
    <ligand>
        <name>K(+)</name>
        <dbReference type="ChEBI" id="CHEBI:29103"/>
    </ligand>
</feature>
<feature type="binding site" evidence="1">
    <location>
        <position position="230"/>
    </location>
    <ligand>
        <name>Mg(2+)</name>
        <dbReference type="ChEBI" id="CHEBI:18420"/>
    </ligand>
</feature>
<feature type="binding site" evidence="1">
    <location>
        <begin position="245"/>
        <end position="251"/>
    </location>
    <ligand>
        <name>GTP</name>
        <dbReference type="ChEBI" id="CHEBI:37565"/>
    </ligand>
</feature>
<feature type="binding site" evidence="1">
    <location>
        <position position="245"/>
    </location>
    <ligand>
        <name>K(+)</name>
        <dbReference type="ChEBI" id="CHEBI:29103"/>
    </ligand>
</feature>
<feature type="binding site" evidence="1">
    <location>
        <position position="247"/>
    </location>
    <ligand>
        <name>K(+)</name>
        <dbReference type="ChEBI" id="CHEBI:29103"/>
    </ligand>
</feature>
<feature type="binding site" evidence="1">
    <location>
        <position position="250"/>
    </location>
    <ligand>
        <name>K(+)</name>
        <dbReference type="ChEBI" id="CHEBI:29103"/>
    </ligand>
</feature>
<feature type="binding site" evidence="1">
    <location>
        <position position="251"/>
    </location>
    <ligand>
        <name>Mg(2+)</name>
        <dbReference type="ChEBI" id="CHEBI:18420"/>
    </ligand>
</feature>
<feature type="binding site" evidence="1">
    <location>
        <begin position="270"/>
        <end position="273"/>
    </location>
    <ligand>
        <name>GTP</name>
        <dbReference type="ChEBI" id="CHEBI:37565"/>
    </ligand>
</feature>
<feature type="binding site" evidence="1">
    <location>
        <begin position="335"/>
        <end position="338"/>
    </location>
    <ligand>
        <name>GTP</name>
        <dbReference type="ChEBI" id="CHEBI:37565"/>
    </ligand>
</feature>
<feature type="binding site" evidence="1">
    <location>
        <begin position="358"/>
        <end position="360"/>
    </location>
    <ligand>
        <name>GTP</name>
        <dbReference type="ChEBI" id="CHEBI:37565"/>
    </ligand>
</feature>
<feature type="binding site" evidence="1">
    <location>
        <position position="454"/>
    </location>
    <ligand>
        <name>(6S)-5-formyl-5,6,7,8-tetrahydrofolate</name>
        <dbReference type="ChEBI" id="CHEBI:57457"/>
    </ligand>
</feature>
<sequence length="454" mass="49023">MSTTDTIVAQATPPGRGGVGILRVSGRAASEVAHAVLGKLPKPRYADYLPFKDVDGSTLDQGIALYFPGPNSFTGEDVLELQGHGGPVILDLLLKRILALPGLRIARPGEFSERAFLNDKLDLAQAEAIADLIDASSEQAARSAVNSLQGAFSARIHQLVEALTHLRIYVEAAIDFPDEEIDFLSDGKIEGQLNGVMADLEQVRTEARQGSLLREGMKVVIAGRPNAGKSSLLNALAGREAAIVTDIAGTTRDVLREHIHIDGMPLHIIDTAGLREANDEVERIGIERAWNEIEQADRVLFMVDGTTTDATEPAAIWPEFMARLPATLPITVVRNKADITGETLGLTKVNGHSLIRLSARTGEGIDLLRDHLKQSMGFTSNTEGGFLARRRHLQALETAARHLVQGHEQLVSAYAGELLAEELRLAQQSLSEITGEFSSDDLLGRIFSSFCIGK</sequence>
<keyword id="KW-0963">Cytoplasm</keyword>
<keyword id="KW-0342">GTP-binding</keyword>
<keyword id="KW-0378">Hydrolase</keyword>
<keyword id="KW-0460">Magnesium</keyword>
<keyword id="KW-0479">Metal-binding</keyword>
<keyword id="KW-0547">Nucleotide-binding</keyword>
<keyword id="KW-0630">Potassium</keyword>
<keyword id="KW-0819">tRNA processing</keyword>
<gene>
    <name evidence="1" type="primary">mnmE</name>
    <name evidence="1" type="synonym">trmE</name>
    <name type="ordered locus">YPTS_4201</name>
</gene>
<reference key="1">
    <citation type="submission" date="2008-04" db="EMBL/GenBank/DDBJ databases">
        <title>Complete sequence of Yersinia pseudotuberculosis PB1/+.</title>
        <authorList>
            <person name="Copeland A."/>
            <person name="Lucas S."/>
            <person name="Lapidus A."/>
            <person name="Glavina del Rio T."/>
            <person name="Dalin E."/>
            <person name="Tice H."/>
            <person name="Bruce D."/>
            <person name="Goodwin L."/>
            <person name="Pitluck S."/>
            <person name="Munk A.C."/>
            <person name="Brettin T."/>
            <person name="Detter J.C."/>
            <person name="Han C."/>
            <person name="Tapia R."/>
            <person name="Schmutz J."/>
            <person name="Larimer F."/>
            <person name="Land M."/>
            <person name="Hauser L."/>
            <person name="Challacombe J.F."/>
            <person name="Green L."/>
            <person name="Lindler L.E."/>
            <person name="Nikolich M.P."/>
            <person name="Richardson P."/>
        </authorList>
    </citation>
    <scope>NUCLEOTIDE SEQUENCE [LARGE SCALE GENOMIC DNA]</scope>
    <source>
        <strain>PB1/+</strain>
    </source>
</reference>
<accession>B2K868</accession>
<name>MNME_YERPB</name>
<protein>
    <recommendedName>
        <fullName evidence="1">tRNA modification GTPase MnmE</fullName>
        <ecNumber evidence="1">3.6.-.-</ecNumber>
    </recommendedName>
</protein>
<proteinExistence type="inferred from homology"/>
<organism>
    <name type="scientific">Yersinia pseudotuberculosis serotype IB (strain PB1/+)</name>
    <dbReference type="NCBI Taxonomy" id="502801"/>
    <lineage>
        <taxon>Bacteria</taxon>
        <taxon>Pseudomonadati</taxon>
        <taxon>Pseudomonadota</taxon>
        <taxon>Gammaproteobacteria</taxon>
        <taxon>Enterobacterales</taxon>
        <taxon>Yersiniaceae</taxon>
        <taxon>Yersinia</taxon>
    </lineage>
</organism>